<protein>
    <recommendedName>
        <fullName>Uncharacterized protein YvzG</fullName>
    </recommendedName>
</protein>
<accession>C0H3R9</accession>
<keyword id="KW-1185">Reference proteome</keyword>
<sequence>MKSIEDYTLLSAYYHLLFTIEEGLCYLIEAEENLSKTEGDRIYQDLIQAFFYLDSTHSTLLFIMDSRCAEICVKAFDQIFAEFDQLVSFSFPSHEFCEYLKEHFLIHYRKWMLSIHQCMEPFLIN</sequence>
<feature type="chain" id="PRO_0000386675" description="Uncharacterized protein YvzG">
    <location>
        <begin position="1"/>
        <end position="125"/>
    </location>
</feature>
<gene>
    <name type="primary">yvzG</name>
    <name type="ordered locus">BSU35319</name>
</gene>
<name>YVZG_BACSU</name>
<reference key="1">
    <citation type="journal article" date="1997" name="Nature">
        <title>The complete genome sequence of the Gram-positive bacterium Bacillus subtilis.</title>
        <authorList>
            <person name="Kunst F."/>
            <person name="Ogasawara N."/>
            <person name="Moszer I."/>
            <person name="Albertini A.M."/>
            <person name="Alloni G."/>
            <person name="Azevedo V."/>
            <person name="Bertero M.G."/>
            <person name="Bessieres P."/>
            <person name="Bolotin A."/>
            <person name="Borchert S."/>
            <person name="Borriss R."/>
            <person name="Boursier L."/>
            <person name="Brans A."/>
            <person name="Braun M."/>
            <person name="Brignell S.C."/>
            <person name="Bron S."/>
            <person name="Brouillet S."/>
            <person name="Bruschi C.V."/>
            <person name="Caldwell B."/>
            <person name="Capuano V."/>
            <person name="Carter N.M."/>
            <person name="Choi S.-K."/>
            <person name="Codani J.-J."/>
            <person name="Connerton I.F."/>
            <person name="Cummings N.J."/>
            <person name="Daniel R.A."/>
            <person name="Denizot F."/>
            <person name="Devine K.M."/>
            <person name="Duesterhoeft A."/>
            <person name="Ehrlich S.D."/>
            <person name="Emmerson P.T."/>
            <person name="Entian K.-D."/>
            <person name="Errington J."/>
            <person name="Fabret C."/>
            <person name="Ferrari E."/>
            <person name="Foulger D."/>
            <person name="Fritz C."/>
            <person name="Fujita M."/>
            <person name="Fujita Y."/>
            <person name="Fuma S."/>
            <person name="Galizzi A."/>
            <person name="Galleron N."/>
            <person name="Ghim S.-Y."/>
            <person name="Glaser P."/>
            <person name="Goffeau A."/>
            <person name="Golightly E.J."/>
            <person name="Grandi G."/>
            <person name="Guiseppi G."/>
            <person name="Guy B.J."/>
            <person name="Haga K."/>
            <person name="Haiech J."/>
            <person name="Harwood C.R."/>
            <person name="Henaut A."/>
            <person name="Hilbert H."/>
            <person name="Holsappel S."/>
            <person name="Hosono S."/>
            <person name="Hullo M.-F."/>
            <person name="Itaya M."/>
            <person name="Jones L.-M."/>
            <person name="Joris B."/>
            <person name="Karamata D."/>
            <person name="Kasahara Y."/>
            <person name="Klaerr-Blanchard M."/>
            <person name="Klein C."/>
            <person name="Kobayashi Y."/>
            <person name="Koetter P."/>
            <person name="Koningstein G."/>
            <person name="Krogh S."/>
            <person name="Kumano M."/>
            <person name="Kurita K."/>
            <person name="Lapidus A."/>
            <person name="Lardinois S."/>
            <person name="Lauber J."/>
            <person name="Lazarevic V."/>
            <person name="Lee S.-M."/>
            <person name="Levine A."/>
            <person name="Liu H."/>
            <person name="Masuda S."/>
            <person name="Mauel C."/>
            <person name="Medigue C."/>
            <person name="Medina N."/>
            <person name="Mellado R.P."/>
            <person name="Mizuno M."/>
            <person name="Moestl D."/>
            <person name="Nakai S."/>
            <person name="Noback M."/>
            <person name="Noone D."/>
            <person name="O'Reilly M."/>
            <person name="Ogawa K."/>
            <person name="Ogiwara A."/>
            <person name="Oudega B."/>
            <person name="Park S.-H."/>
            <person name="Parro V."/>
            <person name="Pohl T.M."/>
            <person name="Portetelle D."/>
            <person name="Porwollik S."/>
            <person name="Prescott A.M."/>
            <person name="Presecan E."/>
            <person name="Pujic P."/>
            <person name="Purnelle B."/>
            <person name="Rapoport G."/>
            <person name="Rey M."/>
            <person name="Reynolds S."/>
            <person name="Rieger M."/>
            <person name="Rivolta C."/>
            <person name="Rocha E."/>
            <person name="Roche B."/>
            <person name="Rose M."/>
            <person name="Sadaie Y."/>
            <person name="Sato T."/>
            <person name="Scanlan E."/>
            <person name="Schleich S."/>
            <person name="Schroeter R."/>
            <person name="Scoffone F."/>
            <person name="Sekiguchi J."/>
            <person name="Sekowska A."/>
            <person name="Seror S.J."/>
            <person name="Serror P."/>
            <person name="Shin B.-S."/>
            <person name="Soldo B."/>
            <person name="Sorokin A."/>
            <person name="Tacconi E."/>
            <person name="Takagi T."/>
            <person name="Takahashi H."/>
            <person name="Takemaru K."/>
            <person name="Takeuchi M."/>
            <person name="Tamakoshi A."/>
            <person name="Tanaka T."/>
            <person name="Terpstra P."/>
            <person name="Tognoni A."/>
            <person name="Tosato V."/>
            <person name="Uchiyama S."/>
            <person name="Vandenbol M."/>
            <person name="Vannier F."/>
            <person name="Vassarotti A."/>
            <person name="Viari A."/>
            <person name="Wambutt R."/>
            <person name="Wedler E."/>
            <person name="Wedler H."/>
            <person name="Weitzenegger T."/>
            <person name="Winters P."/>
            <person name="Wipat A."/>
            <person name="Yamamoto H."/>
            <person name="Yamane K."/>
            <person name="Yasumoto K."/>
            <person name="Yata K."/>
            <person name="Yoshida K."/>
            <person name="Yoshikawa H.-F."/>
            <person name="Zumstein E."/>
            <person name="Yoshikawa H."/>
            <person name="Danchin A."/>
        </authorList>
    </citation>
    <scope>NUCLEOTIDE SEQUENCE [LARGE SCALE GENOMIC DNA]</scope>
    <source>
        <strain>168</strain>
    </source>
</reference>
<proteinExistence type="predicted"/>
<organism>
    <name type="scientific">Bacillus subtilis (strain 168)</name>
    <dbReference type="NCBI Taxonomy" id="224308"/>
    <lineage>
        <taxon>Bacteria</taxon>
        <taxon>Bacillati</taxon>
        <taxon>Bacillota</taxon>
        <taxon>Bacilli</taxon>
        <taxon>Bacillales</taxon>
        <taxon>Bacillaceae</taxon>
        <taxon>Bacillus</taxon>
    </lineage>
</organism>
<dbReference type="EMBL" id="AL009126">
    <property type="protein sequence ID" value="CAX52698.1"/>
    <property type="molecule type" value="Genomic_DNA"/>
</dbReference>
<dbReference type="RefSeq" id="WP_003244377.1">
    <property type="nucleotide sequence ID" value="NZ_OZ025638.1"/>
</dbReference>
<dbReference type="RefSeq" id="YP_003097791.1">
    <property type="nucleotide sequence ID" value="NC_000964.3"/>
</dbReference>
<dbReference type="FunCoup" id="C0H3R9">
    <property type="interactions" value="81"/>
</dbReference>
<dbReference type="STRING" id="224308.BSU35319"/>
<dbReference type="PaxDb" id="224308-BSU35319"/>
<dbReference type="EnsemblBacteria" id="CAX52698">
    <property type="protein sequence ID" value="CAX52698"/>
    <property type="gene ID" value="BSU_35319"/>
</dbReference>
<dbReference type="GeneID" id="8303029"/>
<dbReference type="KEGG" id="bsu:BSU35319"/>
<dbReference type="PATRIC" id="fig|224308.179.peg.3822"/>
<dbReference type="eggNOG" id="ENOG5031FEZ">
    <property type="taxonomic scope" value="Bacteria"/>
</dbReference>
<dbReference type="InParanoid" id="C0H3R9"/>
<dbReference type="OrthoDB" id="2922677at2"/>
<dbReference type="BioCyc" id="BSUB:BSU35319-MONOMER"/>
<dbReference type="Proteomes" id="UP000001570">
    <property type="component" value="Chromosome"/>
</dbReference>